<evidence type="ECO:0000250" key="1">
    <source>
        <dbReference type="UniProtKB" id="Q8L9J7"/>
    </source>
</evidence>
<evidence type="ECO:0000255" key="2"/>
<evidence type="ECO:0000269" key="3">
    <source>
    </source>
</evidence>
<evidence type="ECO:0000269" key="4">
    <source>
    </source>
</evidence>
<evidence type="ECO:0000303" key="5">
    <source>
    </source>
</evidence>
<evidence type="ECO:0000305" key="6"/>
<proteinExistence type="evidence at protein level"/>
<protein>
    <recommendedName>
        <fullName evidence="5">Bidirectional sugar transporter SWEET2</fullName>
        <shortName evidence="5">AtSWEET2</shortName>
    </recommendedName>
    <alternativeName>
        <fullName evidence="5">Protein SUGARS WILL EVENTUALLY BE EXPORTED TRANSPORTERS 2</fullName>
    </alternativeName>
</protein>
<accession>Q9LH79</accession>
<accession>Q0WLP7</accession>
<name>SWET2_ARATH</name>
<comment type="function">
    <text evidence="1">Mediates both low-affinity uptake and efflux of sugar across the plasma membrane.</text>
</comment>
<comment type="subunit">
    <text evidence="4">Forms heterooligomers with SWEET17.</text>
</comment>
<comment type="subcellular location">
    <subcellularLocation>
        <location evidence="1">Cell membrane</location>
        <topology evidence="1">Multi-pass membrane protein</topology>
    </subcellularLocation>
</comment>
<comment type="induction">
    <text evidence="3">Slightly induced by the powdery mildew fungus G.cichoracearum and the pathogenic bacteria P.syringae pv. tomato.</text>
</comment>
<comment type="similarity">
    <text evidence="6">Belongs to the SWEET sugar transporter family.</text>
</comment>
<gene>
    <name evidence="5" type="primary">SWEET2</name>
    <name type="ordered locus">At3g14770</name>
    <name type="ORF">T21E2.2</name>
</gene>
<dbReference type="EMBL" id="AP002061">
    <property type="protein sequence ID" value="BAB02642.1"/>
    <property type="molecule type" value="Genomic_DNA"/>
</dbReference>
<dbReference type="EMBL" id="CP002686">
    <property type="protein sequence ID" value="AEE75565.1"/>
    <property type="molecule type" value="Genomic_DNA"/>
</dbReference>
<dbReference type="EMBL" id="AY054229">
    <property type="protein sequence ID" value="AAL06889.1"/>
    <property type="molecule type" value="mRNA"/>
</dbReference>
<dbReference type="EMBL" id="AY066044">
    <property type="protein sequence ID" value="AAL47411.1"/>
    <property type="molecule type" value="mRNA"/>
</dbReference>
<dbReference type="EMBL" id="AK230146">
    <property type="protein sequence ID" value="BAF01960.1"/>
    <property type="molecule type" value="mRNA"/>
</dbReference>
<dbReference type="RefSeq" id="NP_566493.1">
    <property type="nucleotide sequence ID" value="NM_112338.5"/>
</dbReference>
<dbReference type="SMR" id="Q9LH79"/>
<dbReference type="BioGRID" id="6039">
    <property type="interactions" value="3"/>
</dbReference>
<dbReference type="FunCoup" id="Q9LH79">
    <property type="interactions" value="456"/>
</dbReference>
<dbReference type="IntAct" id="Q9LH79">
    <property type="interactions" value="2"/>
</dbReference>
<dbReference type="STRING" id="3702.Q9LH79"/>
<dbReference type="GlyCosmos" id="Q9LH79">
    <property type="glycosylation" value="1 site, No reported glycans"/>
</dbReference>
<dbReference type="GlyGen" id="Q9LH79">
    <property type="glycosylation" value="1 site"/>
</dbReference>
<dbReference type="PaxDb" id="3702-AT3G14770.1"/>
<dbReference type="ProteomicsDB" id="226532"/>
<dbReference type="EnsemblPlants" id="AT3G14770.1">
    <property type="protein sequence ID" value="AT3G14770.1"/>
    <property type="gene ID" value="AT3G14770"/>
</dbReference>
<dbReference type="GeneID" id="820705"/>
<dbReference type="Gramene" id="AT3G14770.1">
    <property type="protein sequence ID" value="AT3G14770.1"/>
    <property type="gene ID" value="AT3G14770"/>
</dbReference>
<dbReference type="KEGG" id="ath:AT3G14770"/>
<dbReference type="Araport" id="AT3G14770"/>
<dbReference type="TAIR" id="AT3G14770">
    <property type="gene designation" value="SWEET2"/>
</dbReference>
<dbReference type="eggNOG" id="KOG1623">
    <property type="taxonomic scope" value="Eukaryota"/>
</dbReference>
<dbReference type="HOGENOM" id="CLU_048643_1_1_1"/>
<dbReference type="InParanoid" id="Q9LH79"/>
<dbReference type="OMA" id="CFVCNDI"/>
<dbReference type="OrthoDB" id="409725at2759"/>
<dbReference type="PhylomeDB" id="Q9LH79"/>
<dbReference type="PRO" id="PR:Q9LH79"/>
<dbReference type="Proteomes" id="UP000006548">
    <property type="component" value="Chromosome 3"/>
</dbReference>
<dbReference type="ExpressionAtlas" id="Q9LH79">
    <property type="expression patterns" value="baseline and differential"/>
</dbReference>
<dbReference type="GO" id="GO:0005886">
    <property type="term" value="C:plasma membrane"/>
    <property type="evidence" value="ECO:0000250"/>
    <property type="project" value="UniProtKB"/>
</dbReference>
<dbReference type="GO" id="GO:0051119">
    <property type="term" value="F:sugar transmembrane transporter activity"/>
    <property type="evidence" value="ECO:0000250"/>
    <property type="project" value="UniProtKB"/>
</dbReference>
<dbReference type="FunFam" id="1.20.1280.290:FF:000001">
    <property type="entry name" value="Bidirectional sugar transporter SWEET"/>
    <property type="match status" value="1"/>
</dbReference>
<dbReference type="FunFam" id="1.20.1280.290:FF:000002">
    <property type="entry name" value="Bidirectional sugar transporter SWEET"/>
    <property type="match status" value="1"/>
</dbReference>
<dbReference type="Gene3D" id="1.20.1280.290">
    <property type="match status" value="2"/>
</dbReference>
<dbReference type="InterPro" id="IPR047664">
    <property type="entry name" value="SWEET"/>
</dbReference>
<dbReference type="InterPro" id="IPR004316">
    <property type="entry name" value="SWEET_rpt"/>
</dbReference>
<dbReference type="PANTHER" id="PTHR10791:SF111">
    <property type="entry name" value="BIDIRECTIONAL SUGAR TRANSPORTER SWEET2"/>
    <property type="match status" value="1"/>
</dbReference>
<dbReference type="PANTHER" id="PTHR10791">
    <property type="entry name" value="RAG1-ACTIVATING PROTEIN 1"/>
    <property type="match status" value="1"/>
</dbReference>
<dbReference type="Pfam" id="PF03083">
    <property type="entry name" value="MtN3_slv"/>
    <property type="match status" value="2"/>
</dbReference>
<sequence>MDVFAFNASLSMCKDVAGIAGNIFAFGLFVSPMPTFRRIMRNKSTEQFSGLPYIYALLNCLICLWYGTPFISHSNAMLMTVNSVGATFQLCYIILFIMHTDKKNKMKMLGLLFVVFAVVGVIVAGSLQIPDQLTRWYFVGFLSCGSLVSMFASPLFVINLVIRTKSVEFMPFYLSLSTFLMSASFLLYGLFNSDAFVYTPNGIGTILGIVQLALYCYYHRNSIEEETKEPLIVSYV</sequence>
<keyword id="KW-1003">Cell membrane</keyword>
<keyword id="KW-0325">Glycoprotein</keyword>
<keyword id="KW-0472">Membrane</keyword>
<keyword id="KW-1185">Reference proteome</keyword>
<keyword id="KW-0677">Repeat</keyword>
<keyword id="KW-0762">Sugar transport</keyword>
<keyword id="KW-0812">Transmembrane</keyword>
<keyword id="KW-1133">Transmembrane helix</keyword>
<keyword id="KW-0813">Transport</keyword>
<organism>
    <name type="scientific">Arabidopsis thaliana</name>
    <name type="common">Mouse-ear cress</name>
    <dbReference type="NCBI Taxonomy" id="3702"/>
    <lineage>
        <taxon>Eukaryota</taxon>
        <taxon>Viridiplantae</taxon>
        <taxon>Streptophyta</taxon>
        <taxon>Embryophyta</taxon>
        <taxon>Tracheophyta</taxon>
        <taxon>Spermatophyta</taxon>
        <taxon>Magnoliopsida</taxon>
        <taxon>eudicotyledons</taxon>
        <taxon>Gunneridae</taxon>
        <taxon>Pentapetalae</taxon>
        <taxon>rosids</taxon>
        <taxon>malvids</taxon>
        <taxon>Brassicales</taxon>
        <taxon>Brassicaceae</taxon>
        <taxon>Camelineae</taxon>
        <taxon>Arabidopsis</taxon>
    </lineage>
</organism>
<feature type="chain" id="PRO_0000404103" description="Bidirectional sugar transporter SWEET2">
    <location>
        <begin position="1"/>
        <end position="236"/>
    </location>
</feature>
<feature type="topological domain" description="Extracellular" evidence="2">
    <location>
        <begin position="1"/>
        <end position="15"/>
    </location>
</feature>
<feature type="transmembrane region" description="Helical; Name=1" evidence="2">
    <location>
        <begin position="16"/>
        <end position="36"/>
    </location>
</feature>
<feature type="topological domain" description="Cytoplasmic" evidence="2">
    <location>
        <begin position="37"/>
        <end position="50"/>
    </location>
</feature>
<feature type="transmembrane region" description="Helical; Name=2" evidence="2">
    <location>
        <begin position="51"/>
        <end position="71"/>
    </location>
</feature>
<feature type="topological domain" description="Extracellular" evidence="2">
    <location>
        <begin position="72"/>
        <end position="76"/>
    </location>
</feature>
<feature type="transmembrane region" description="Helical; Name=3" evidence="2">
    <location>
        <begin position="77"/>
        <end position="97"/>
    </location>
</feature>
<feature type="topological domain" description="Cytoplasmic" evidence="2">
    <location>
        <begin position="98"/>
        <end position="108"/>
    </location>
</feature>
<feature type="transmembrane region" description="Helical; Name=4" evidence="2">
    <location>
        <begin position="109"/>
        <end position="129"/>
    </location>
</feature>
<feature type="topological domain" description="Extracellular" evidence="2">
    <location>
        <begin position="130"/>
        <end position="137"/>
    </location>
</feature>
<feature type="transmembrane region" description="Helical; Name=5" evidence="2">
    <location>
        <begin position="138"/>
        <end position="158"/>
    </location>
</feature>
<feature type="topological domain" description="Cytoplasmic" evidence="2">
    <location>
        <begin position="159"/>
        <end position="170"/>
    </location>
</feature>
<feature type="transmembrane region" description="Helical; Name=6" evidence="2">
    <location>
        <begin position="171"/>
        <end position="191"/>
    </location>
</feature>
<feature type="topological domain" description="Extracellular" evidence="2">
    <location>
        <begin position="192"/>
        <end position="194"/>
    </location>
</feature>
<feature type="transmembrane region" description="Helical; Name=7" evidence="2">
    <location>
        <begin position="195"/>
        <end position="215"/>
    </location>
</feature>
<feature type="topological domain" description="Cytoplasmic" evidence="2">
    <location>
        <begin position="216"/>
        <end position="236"/>
    </location>
</feature>
<feature type="domain" description="MtN3/slv 1">
    <location>
        <begin position="18"/>
        <end position="103"/>
    </location>
</feature>
<feature type="domain" description="MtN3/slv 2">
    <location>
        <begin position="138"/>
        <end position="221"/>
    </location>
</feature>
<feature type="glycosylation site" description="N-linked (GlcNAc...) asparagine" evidence="2">
    <location>
        <position position="7"/>
    </location>
</feature>
<reference key="1">
    <citation type="journal article" date="2000" name="DNA Res.">
        <title>Structural analysis of Arabidopsis thaliana chromosome 3. II. Sequence features of the 4,251,695 bp regions covered by 90 P1, TAC and BAC clones.</title>
        <authorList>
            <person name="Kaneko T."/>
            <person name="Katoh T."/>
            <person name="Sato S."/>
            <person name="Nakamura Y."/>
            <person name="Asamizu E."/>
            <person name="Tabata S."/>
        </authorList>
    </citation>
    <scope>NUCLEOTIDE SEQUENCE [LARGE SCALE GENOMIC DNA]</scope>
    <source>
        <strain>cv. Columbia</strain>
    </source>
</reference>
<reference key="2">
    <citation type="journal article" date="2017" name="Plant J.">
        <title>Araport11: a complete reannotation of the Arabidopsis thaliana reference genome.</title>
        <authorList>
            <person name="Cheng C.Y."/>
            <person name="Krishnakumar V."/>
            <person name="Chan A.P."/>
            <person name="Thibaud-Nissen F."/>
            <person name="Schobel S."/>
            <person name="Town C.D."/>
        </authorList>
    </citation>
    <scope>GENOME REANNOTATION</scope>
    <source>
        <strain>cv. Columbia</strain>
    </source>
</reference>
<reference key="3">
    <citation type="journal article" date="2003" name="Science">
        <title>Empirical analysis of transcriptional activity in the Arabidopsis genome.</title>
        <authorList>
            <person name="Yamada K."/>
            <person name="Lim J."/>
            <person name="Dale J.M."/>
            <person name="Chen H."/>
            <person name="Shinn P."/>
            <person name="Palm C.J."/>
            <person name="Southwick A.M."/>
            <person name="Wu H.C."/>
            <person name="Kim C.J."/>
            <person name="Nguyen M."/>
            <person name="Pham P.K."/>
            <person name="Cheuk R.F."/>
            <person name="Karlin-Newmann G."/>
            <person name="Liu S.X."/>
            <person name="Lam B."/>
            <person name="Sakano H."/>
            <person name="Wu T."/>
            <person name="Yu G."/>
            <person name="Miranda M."/>
            <person name="Quach H.L."/>
            <person name="Tripp M."/>
            <person name="Chang C.H."/>
            <person name="Lee J.M."/>
            <person name="Toriumi M.J."/>
            <person name="Chan M.M."/>
            <person name="Tang C.C."/>
            <person name="Onodera C.S."/>
            <person name="Deng J.M."/>
            <person name="Akiyama K."/>
            <person name="Ansari Y."/>
            <person name="Arakawa T."/>
            <person name="Banh J."/>
            <person name="Banno F."/>
            <person name="Bowser L."/>
            <person name="Brooks S.Y."/>
            <person name="Carninci P."/>
            <person name="Chao Q."/>
            <person name="Choy N."/>
            <person name="Enju A."/>
            <person name="Goldsmith A.D."/>
            <person name="Gurjal M."/>
            <person name="Hansen N.F."/>
            <person name="Hayashizaki Y."/>
            <person name="Johnson-Hopson C."/>
            <person name="Hsuan V.W."/>
            <person name="Iida K."/>
            <person name="Karnes M."/>
            <person name="Khan S."/>
            <person name="Koesema E."/>
            <person name="Ishida J."/>
            <person name="Jiang P.X."/>
            <person name="Jones T."/>
            <person name="Kawai J."/>
            <person name="Kamiya A."/>
            <person name="Meyers C."/>
            <person name="Nakajima M."/>
            <person name="Narusaka M."/>
            <person name="Seki M."/>
            <person name="Sakurai T."/>
            <person name="Satou M."/>
            <person name="Tamse R."/>
            <person name="Vaysberg M."/>
            <person name="Wallender E.K."/>
            <person name="Wong C."/>
            <person name="Yamamura Y."/>
            <person name="Yuan S."/>
            <person name="Shinozaki K."/>
            <person name="Davis R.W."/>
            <person name="Theologis A."/>
            <person name="Ecker J.R."/>
        </authorList>
    </citation>
    <scope>NUCLEOTIDE SEQUENCE [LARGE SCALE MRNA]</scope>
    <source>
        <strain>cv. Columbia</strain>
    </source>
</reference>
<reference key="4">
    <citation type="submission" date="2006-07" db="EMBL/GenBank/DDBJ databases">
        <title>Large-scale analysis of RIKEN Arabidopsis full-length (RAFL) cDNAs.</title>
        <authorList>
            <person name="Totoki Y."/>
            <person name="Seki M."/>
            <person name="Ishida J."/>
            <person name="Nakajima M."/>
            <person name="Enju A."/>
            <person name="Kamiya A."/>
            <person name="Narusaka M."/>
            <person name="Shin-i T."/>
            <person name="Nakagawa M."/>
            <person name="Sakamoto N."/>
            <person name="Oishi K."/>
            <person name="Kohara Y."/>
            <person name="Kobayashi M."/>
            <person name="Toyoda A."/>
            <person name="Sakaki Y."/>
            <person name="Sakurai T."/>
            <person name="Iida K."/>
            <person name="Akiyama K."/>
            <person name="Satou M."/>
            <person name="Toyoda T."/>
            <person name="Konagaya A."/>
            <person name="Carninci P."/>
            <person name="Kawai J."/>
            <person name="Hayashizaki Y."/>
            <person name="Shinozaki K."/>
        </authorList>
    </citation>
    <scope>NUCLEOTIDE SEQUENCE [LARGE SCALE MRNA] OF 203-236</scope>
    <source>
        <strain>cv. Columbia</strain>
    </source>
</reference>
<reference key="5">
    <citation type="journal article" date="2010" name="Nature">
        <title>Sugar transporters for intercellular exchange and nutrition of pathogens.</title>
        <authorList>
            <person name="Chen L.-Q."/>
            <person name="Hou B.-H."/>
            <person name="Lalonde S."/>
            <person name="Takanaga H."/>
            <person name="Hartung M.L."/>
            <person name="Qu X.-Q."/>
            <person name="Guo W.-J."/>
            <person name="Kim J.-G."/>
            <person name="Underwood W."/>
            <person name="Chaudhuri B."/>
            <person name="Chermak D."/>
            <person name="Antony G."/>
            <person name="White F.F."/>
            <person name="Somerville S.C."/>
            <person name="Mudgett M.B."/>
            <person name="Frommer W.B."/>
        </authorList>
    </citation>
    <scope>INDUCTION BY PATHOGENS</scope>
    <scope>GENE FAMILY</scope>
    <scope>NOMENCLATURE</scope>
    <source>
        <strain>cv. Columbia</strain>
    </source>
</reference>
<reference key="6">
    <citation type="journal article" date="2013" name="Proc. Natl. Acad. Sci. U.S.A.">
        <title>Functional role of oligomerization for bacterial and plant SWEET sugar transporter family.</title>
        <authorList>
            <person name="Xuan Y.H."/>
            <person name="Hu Y.B."/>
            <person name="Chen L.-Q."/>
            <person name="Sosso D."/>
            <person name="Ducat D.C."/>
            <person name="Hou B.-H."/>
            <person name="Frommer W.B."/>
        </authorList>
    </citation>
    <scope>INTERACTION WITH SWEET17</scope>
</reference>